<comment type="function">
    <text evidence="1 2">May indirectly participate in activation of the NF-kappa-B and MAPK pathways. Acts as a mediator of BMP4-mediated modulation of canonical Wnt signaling activity in neural stem cells. Required for DNA damage-induced ATM phosphorylation, p53 activation and cell cycle arrest. Involved in myelopoiesis (By similarity). Binds to the oxygen responsive element of COX4I2 and represses its transcription under hypoxia conditions (4% oxygen), as well as normoxia conditions (20% oxygen). May repress COX4I2 transactivation induced by CHCHD2 and RBPJ (By similarity). Binds preferentially to DNA containing cytidine-phosphate-guanosine (CpG) dinucleotides over CpH (H=A, T, and C), hemimethylated-CpG and hemimethylated-hydroxymethyl-CpG (By similarity).</text>
</comment>
<comment type="subunit">
    <text evidence="1 2">Interacts with DVL1 (By similarity). Interacts with RBPJ (By similarity).</text>
</comment>
<comment type="subcellular location">
    <subcellularLocation>
        <location evidence="1">Nucleus</location>
    </subcellularLocation>
    <subcellularLocation>
        <location evidence="1">Cytoplasm</location>
    </subcellularLocation>
    <text evidence="1">Colocalizes with DVL1 in large bodies localized just outside the nuclear membrane.</text>
</comment>
<comment type="developmental stage">
    <text evidence="6">Expressed in dorsal pallium and in and around the developing choroid plexus at 10.5 and 12.5 dpc.</text>
</comment>
<comment type="domain">
    <text evidence="2">The CXXC zinc finger mediates binding to CpG-DNA.</text>
</comment>
<comment type="sequence caution" evidence="7">
    <conflict type="frameshift">
        <sequence resource="EMBL-CDS" id="BAC25113"/>
    </conflict>
</comment>
<comment type="sequence caution" evidence="7">
    <conflict type="frameshift">
        <sequence resource="EMBL-CDS" id="BAC25458"/>
    </conflict>
</comment>
<organism>
    <name type="scientific">Mus musculus</name>
    <name type="common">Mouse</name>
    <dbReference type="NCBI Taxonomy" id="10090"/>
    <lineage>
        <taxon>Eukaryota</taxon>
        <taxon>Metazoa</taxon>
        <taxon>Chordata</taxon>
        <taxon>Craniata</taxon>
        <taxon>Vertebrata</taxon>
        <taxon>Euteleostomi</taxon>
        <taxon>Mammalia</taxon>
        <taxon>Eutheria</taxon>
        <taxon>Euarchontoglires</taxon>
        <taxon>Glires</taxon>
        <taxon>Rodentia</taxon>
        <taxon>Myomorpha</taxon>
        <taxon>Muroidea</taxon>
        <taxon>Muridae</taxon>
        <taxon>Murinae</taxon>
        <taxon>Mus</taxon>
        <taxon>Mus</taxon>
    </lineage>
</organism>
<proteinExistence type="evidence at transcript level"/>
<name>CXXC5_MOUSE</name>
<accession>Q91WA4</accession>
<accession>Q3V0R4</accession>
<accession>Q8CES6</accession>
<accession>Q8CF49</accession>
<reference key="1">
    <citation type="journal article" date="2005" name="Science">
        <title>The transcriptional landscape of the mammalian genome.</title>
        <authorList>
            <person name="Carninci P."/>
            <person name="Kasukawa T."/>
            <person name="Katayama S."/>
            <person name="Gough J."/>
            <person name="Frith M.C."/>
            <person name="Maeda N."/>
            <person name="Oyama R."/>
            <person name="Ravasi T."/>
            <person name="Lenhard B."/>
            <person name="Wells C."/>
            <person name="Kodzius R."/>
            <person name="Shimokawa K."/>
            <person name="Bajic V.B."/>
            <person name="Brenner S.E."/>
            <person name="Batalov S."/>
            <person name="Forrest A.R."/>
            <person name="Zavolan M."/>
            <person name="Davis M.J."/>
            <person name="Wilming L.G."/>
            <person name="Aidinis V."/>
            <person name="Allen J.E."/>
            <person name="Ambesi-Impiombato A."/>
            <person name="Apweiler R."/>
            <person name="Aturaliya R.N."/>
            <person name="Bailey T.L."/>
            <person name="Bansal M."/>
            <person name="Baxter L."/>
            <person name="Beisel K.W."/>
            <person name="Bersano T."/>
            <person name="Bono H."/>
            <person name="Chalk A.M."/>
            <person name="Chiu K.P."/>
            <person name="Choudhary V."/>
            <person name="Christoffels A."/>
            <person name="Clutterbuck D.R."/>
            <person name="Crowe M.L."/>
            <person name="Dalla E."/>
            <person name="Dalrymple B.P."/>
            <person name="de Bono B."/>
            <person name="Della Gatta G."/>
            <person name="di Bernardo D."/>
            <person name="Down T."/>
            <person name="Engstrom P."/>
            <person name="Fagiolini M."/>
            <person name="Faulkner G."/>
            <person name="Fletcher C.F."/>
            <person name="Fukushima T."/>
            <person name="Furuno M."/>
            <person name="Futaki S."/>
            <person name="Gariboldi M."/>
            <person name="Georgii-Hemming P."/>
            <person name="Gingeras T.R."/>
            <person name="Gojobori T."/>
            <person name="Green R.E."/>
            <person name="Gustincich S."/>
            <person name="Harbers M."/>
            <person name="Hayashi Y."/>
            <person name="Hensch T.K."/>
            <person name="Hirokawa N."/>
            <person name="Hill D."/>
            <person name="Huminiecki L."/>
            <person name="Iacono M."/>
            <person name="Ikeo K."/>
            <person name="Iwama A."/>
            <person name="Ishikawa T."/>
            <person name="Jakt M."/>
            <person name="Kanapin A."/>
            <person name="Katoh M."/>
            <person name="Kawasawa Y."/>
            <person name="Kelso J."/>
            <person name="Kitamura H."/>
            <person name="Kitano H."/>
            <person name="Kollias G."/>
            <person name="Krishnan S.P."/>
            <person name="Kruger A."/>
            <person name="Kummerfeld S.K."/>
            <person name="Kurochkin I.V."/>
            <person name="Lareau L.F."/>
            <person name="Lazarevic D."/>
            <person name="Lipovich L."/>
            <person name="Liu J."/>
            <person name="Liuni S."/>
            <person name="McWilliam S."/>
            <person name="Madan Babu M."/>
            <person name="Madera M."/>
            <person name="Marchionni L."/>
            <person name="Matsuda H."/>
            <person name="Matsuzawa S."/>
            <person name="Miki H."/>
            <person name="Mignone F."/>
            <person name="Miyake S."/>
            <person name="Morris K."/>
            <person name="Mottagui-Tabar S."/>
            <person name="Mulder N."/>
            <person name="Nakano N."/>
            <person name="Nakauchi H."/>
            <person name="Ng P."/>
            <person name="Nilsson R."/>
            <person name="Nishiguchi S."/>
            <person name="Nishikawa S."/>
            <person name="Nori F."/>
            <person name="Ohara O."/>
            <person name="Okazaki Y."/>
            <person name="Orlando V."/>
            <person name="Pang K.C."/>
            <person name="Pavan W.J."/>
            <person name="Pavesi G."/>
            <person name="Pesole G."/>
            <person name="Petrovsky N."/>
            <person name="Piazza S."/>
            <person name="Reed J."/>
            <person name="Reid J.F."/>
            <person name="Ring B.Z."/>
            <person name="Ringwald M."/>
            <person name="Rost B."/>
            <person name="Ruan Y."/>
            <person name="Salzberg S.L."/>
            <person name="Sandelin A."/>
            <person name="Schneider C."/>
            <person name="Schoenbach C."/>
            <person name="Sekiguchi K."/>
            <person name="Semple C.A."/>
            <person name="Seno S."/>
            <person name="Sessa L."/>
            <person name="Sheng Y."/>
            <person name="Shibata Y."/>
            <person name="Shimada H."/>
            <person name="Shimada K."/>
            <person name="Silva D."/>
            <person name="Sinclair B."/>
            <person name="Sperling S."/>
            <person name="Stupka E."/>
            <person name="Sugiura K."/>
            <person name="Sultana R."/>
            <person name="Takenaka Y."/>
            <person name="Taki K."/>
            <person name="Tammoja K."/>
            <person name="Tan S.L."/>
            <person name="Tang S."/>
            <person name="Taylor M.S."/>
            <person name="Tegner J."/>
            <person name="Teichmann S.A."/>
            <person name="Ueda H.R."/>
            <person name="van Nimwegen E."/>
            <person name="Verardo R."/>
            <person name="Wei C.L."/>
            <person name="Yagi K."/>
            <person name="Yamanishi H."/>
            <person name="Zabarovsky E."/>
            <person name="Zhu S."/>
            <person name="Zimmer A."/>
            <person name="Hide W."/>
            <person name="Bult C."/>
            <person name="Grimmond S.M."/>
            <person name="Teasdale R.D."/>
            <person name="Liu E.T."/>
            <person name="Brusic V."/>
            <person name="Quackenbush J."/>
            <person name="Wahlestedt C."/>
            <person name="Mattick J.S."/>
            <person name="Hume D.A."/>
            <person name="Kai C."/>
            <person name="Sasaki D."/>
            <person name="Tomaru Y."/>
            <person name="Fukuda S."/>
            <person name="Kanamori-Katayama M."/>
            <person name="Suzuki M."/>
            <person name="Aoki J."/>
            <person name="Arakawa T."/>
            <person name="Iida J."/>
            <person name="Imamura K."/>
            <person name="Itoh M."/>
            <person name="Kato T."/>
            <person name="Kawaji H."/>
            <person name="Kawagashira N."/>
            <person name="Kawashima T."/>
            <person name="Kojima M."/>
            <person name="Kondo S."/>
            <person name="Konno H."/>
            <person name="Nakano K."/>
            <person name="Ninomiya N."/>
            <person name="Nishio T."/>
            <person name="Okada M."/>
            <person name="Plessy C."/>
            <person name="Shibata K."/>
            <person name="Shiraki T."/>
            <person name="Suzuki S."/>
            <person name="Tagami M."/>
            <person name="Waki K."/>
            <person name="Watahiki A."/>
            <person name="Okamura-Oho Y."/>
            <person name="Suzuki H."/>
            <person name="Kawai J."/>
            <person name="Hayashizaki Y."/>
        </authorList>
    </citation>
    <scope>NUCLEOTIDE SEQUENCE [LARGE SCALE MRNA]</scope>
    <source>
        <strain>C57BL/6J</strain>
        <tissue>Cerebellum</tissue>
        <tissue>Testis</tissue>
    </source>
</reference>
<reference key="2">
    <citation type="journal article" date="2004" name="Genome Res.">
        <title>The status, quality, and expansion of the NIH full-length cDNA project: the Mammalian Gene Collection (MGC).</title>
        <authorList>
            <consortium name="The MGC Project Team"/>
        </authorList>
    </citation>
    <scope>NUCLEOTIDE SEQUENCE [LARGE SCALE MRNA]</scope>
    <source>
        <strain>C57BL/6J</strain>
        <strain>FVB/N</strain>
        <tissue>Eye</tissue>
        <tissue>Salivary gland</tissue>
    </source>
</reference>
<reference key="3">
    <citation type="journal article" date="2009" name="J. Biol. Chem.">
        <title>CXXC5 is a novel BMP4-regulated modulator of Wnt signaling in neural stem cells.</title>
        <authorList>
            <person name="Andersson T."/>
            <person name="Soedersten E."/>
            <person name="Duckworth J.K."/>
            <person name="Cascante A."/>
            <person name="Fritz N."/>
            <person name="Sacchetti P."/>
            <person name="Cervenka I."/>
            <person name="Bryja V."/>
            <person name="Hermanson O."/>
        </authorList>
    </citation>
    <scope>DEVELOPMENTAL STAGE</scope>
</reference>
<feature type="chain" id="PRO_0000317549" description="CXXC-type zinc finger protein 5">
    <location>
        <begin position="1"/>
        <end position="317"/>
    </location>
</feature>
<feature type="zinc finger region" description="CXXC-type" evidence="4">
    <location>
        <begin position="251"/>
        <end position="292"/>
    </location>
</feature>
<feature type="region of interest" description="Disordered" evidence="5">
    <location>
        <begin position="1"/>
        <end position="92"/>
    </location>
</feature>
<feature type="short sequence motif" description="Nuclear localization signal" evidence="3">
    <location>
        <begin position="252"/>
        <end position="257"/>
    </location>
</feature>
<feature type="compositionally biased region" description="Gly residues" evidence="5">
    <location>
        <begin position="1"/>
        <end position="10"/>
    </location>
</feature>
<feature type="compositionally biased region" description="Low complexity" evidence="5">
    <location>
        <begin position="11"/>
        <end position="27"/>
    </location>
</feature>
<feature type="compositionally biased region" description="Low complexity" evidence="5">
    <location>
        <begin position="36"/>
        <end position="51"/>
    </location>
</feature>
<feature type="binding site" evidence="4">
    <location>
        <position position="258"/>
    </location>
    <ligand>
        <name>Zn(2+)</name>
        <dbReference type="ChEBI" id="CHEBI:29105"/>
        <label>1</label>
    </ligand>
</feature>
<feature type="binding site" evidence="4">
    <location>
        <position position="261"/>
    </location>
    <ligand>
        <name>Zn(2+)</name>
        <dbReference type="ChEBI" id="CHEBI:29105"/>
        <label>1</label>
    </ligand>
</feature>
<feature type="binding site" evidence="4">
    <location>
        <position position="264"/>
    </location>
    <ligand>
        <name>Zn(2+)</name>
        <dbReference type="ChEBI" id="CHEBI:29105"/>
        <label>1</label>
    </ligand>
</feature>
<feature type="binding site" evidence="4">
    <location>
        <position position="270"/>
    </location>
    <ligand>
        <name>Zn(2+)</name>
        <dbReference type="ChEBI" id="CHEBI:29105"/>
        <label>2</label>
    </ligand>
</feature>
<feature type="binding site" evidence="4">
    <location>
        <position position="273"/>
    </location>
    <ligand>
        <name>Zn(2+)</name>
        <dbReference type="ChEBI" id="CHEBI:29105"/>
        <label>2</label>
    </ligand>
</feature>
<feature type="binding site" evidence="4">
    <location>
        <position position="276"/>
    </location>
    <ligand>
        <name>Zn(2+)</name>
        <dbReference type="ChEBI" id="CHEBI:29105"/>
        <label>2</label>
    </ligand>
</feature>
<feature type="binding site" evidence="4">
    <location>
        <position position="286"/>
    </location>
    <ligand>
        <name>Zn(2+)</name>
        <dbReference type="ChEBI" id="CHEBI:29105"/>
        <label>2</label>
    </ligand>
</feature>
<feature type="binding site" evidence="4">
    <location>
        <position position="291"/>
    </location>
    <ligand>
        <name>Zn(2+)</name>
        <dbReference type="ChEBI" id="CHEBI:29105"/>
        <label>1</label>
    </ligand>
</feature>
<feature type="sequence conflict" description="In Ref. 1; BAE21439." evidence="7" ref="1">
    <original>D</original>
    <variation>G</variation>
    <location>
        <position position="10"/>
    </location>
</feature>
<feature type="sequence conflict" description="In Ref. 1; BAC25458." evidence="7" ref="1">
    <original>A</original>
    <variation>G</variation>
    <location>
        <position position="105"/>
    </location>
</feature>
<gene>
    <name type="primary">Cxxc5</name>
</gene>
<evidence type="ECO:0000250" key="1">
    <source>
        <dbReference type="UniProtKB" id="Q5XIQ3"/>
    </source>
</evidence>
<evidence type="ECO:0000250" key="2">
    <source>
        <dbReference type="UniProtKB" id="Q7LFL8"/>
    </source>
</evidence>
<evidence type="ECO:0000255" key="3"/>
<evidence type="ECO:0000255" key="4">
    <source>
        <dbReference type="PROSITE-ProRule" id="PRU00509"/>
    </source>
</evidence>
<evidence type="ECO:0000256" key="5">
    <source>
        <dbReference type="SAM" id="MobiDB-lite"/>
    </source>
</evidence>
<evidence type="ECO:0000269" key="6">
    <source>
    </source>
</evidence>
<evidence type="ECO:0000305" key="7"/>
<dbReference type="EMBL" id="AK005364">
    <property type="protein sequence ID" value="BAC25113.1"/>
    <property type="status" value="ALT_FRAME"/>
    <property type="molecule type" value="mRNA"/>
</dbReference>
<dbReference type="EMBL" id="AK015150">
    <property type="protein sequence ID" value="BAC25458.1"/>
    <property type="status" value="ALT_FRAME"/>
    <property type="molecule type" value="mRNA"/>
</dbReference>
<dbReference type="EMBL" id="AK132950">
    <property type="protein sequence ID" value="BAE21439.1"/>
    <property type="molecule type" value="mRNA"/>
</dbReference>
<dbReference type="EMBL" id="BC016207">
    <property type="protein sequence ID" value="AAH16207.1"/>
    <property type="molecule type" value="mRNA"/>
</dbReference>
<dbReference type="EMBL" id="BC089314">
    <property type="protein sequence ID" value="AAH89314.1"/>
    <property type="molecule type" value="mRNA"/>
</dbReference>
<dbReference type="CCDS" id="CCDS29150.1"/>
<dbReference type="RefSeq" id="NP_001344387.1">
    <property type="nucleotide sequence ID" value="NM_001357458.1"/>
</dbReference>
<dbReference type="RefSeq" id="NP_001344388.1">
    <property type="nucleotide sequence ID" value="NM_001357459.1"/>
</dbReference>
<dbReference type="RefSeq" id="NP_598448.1">
    <property type="nucleotide sequence ID" value="NM_133687.3"/>
</dbReference>
<dbReference type="RefSeq" id="XP_006526239.1">
    <property type="nucleotide sequence ID" value="XM_006526176.5"/>
</dbReference>
<dbReference type="RefSeq" id="XP_006526240.1">
    <property type="nucleotide sequence ID" value="XM_006526177.3"/>
</dbReference>
<dbReference type="RefSeq" id="XP_006526241.1">
    <property type="nucleotide sequence ID" value="XM_006526178.3"/>
</dbReference>
<dbReference type="RefSeq" id="XP_006526243.1">
    <property type="nucleotide sequence ID" value="XM_006526180.3"/>
</dbReference>
<dbReference type="RefSeq" id="XP_006526244.1">
    <property type="nucleotide sequence ID" value="XM_006526181.5"/>
</dbReference>
<dbReference type="RefSeq" id="XP_030106436.1">
    <property type="nucleotide sequence ID" value="XM_030250576.2"/>
</dbReference>
<dbReference type="RefSeq" id="XP_036017149.1">
    <property type="nucleotide sequence ID" value="XM_036161256.1"/>
</dbReference>
<dbReference type="SMR" id="Q91WA4"/>
<dbReference type="BioGRID" id="212157">
    <property type="interactions" value="9"/>
</dbReference>
<dbReference type="FunCoup" id="Q91WA4">
    <property type="interactions" value="2384"/>
</dbReference>
<dbReference type="IntAct" id="Q91WA4">
    <property type="interactions" value="7"/>
</dbReference>
<dbReference type="MINT" id="Q91WA4"/>
<dbReference type="STRING" id="10090.ENSMUSP00000054307"/>
<dbReference type="GlyGen" id="Q91WA4">
    <property type="glycosylation" value="2 sites, 2 N-linked glycans (2 sites)"/>
</dbReference>
<dbReference type="iPTMnet" id="Q91WA4"/>
<dbReference type="PhosphoSitePlus" id="Q91WA4"/>
<dbReference type="PaxDb" id="10090-ENSMUSP00000054307"/>
<dbReference type="PeptideAtlas" id="Q91WA4"/>
<dbReference type="ProteomicsDB" id="284080"/>
<dbReference type="Pumba" id="Q91WA4"/>
<dbReference type="Antibodypedia" id="49849">
    <property type="antibodies" value="145 antibodies from 30 providers"/>
</dbReference>
<dbReference type="DNASU" id="67393"/>
<dbReference type="Ensembl" id="ENSMUST00000060722.8">
    <property type="protein sequence ID" value="ENSMUSP00000054307.7"/>
    <property type="gene ID" value="ENSMUSG00000046668.10"/>
</dbReference>
<dbReference type="GeneID" id="67393"/>
<dbReference type="KEGG" id="mmu:67393"/>
<dbReference type="UCSC" id="uc008emx.1">
    <property type="organism name" value="mouse"/>
</dbReference>
<dbReference type="AGR" id="MGI:1914643"/>
<dbReference type="CTD" id="51523"/>
<dbReference type="MGI" id="MGI:1914643">
    <property type="gene designation" value="Cxxc5"/>
</dbReference>
<dbReference type="VEuPathDB" id="HostDB:ENSMUSG00000046668"/>
<dbReference type="eggNOG" id="ENOG502QT2M">
    <property type="taxonomic scope" value="Eukaryota"/>
</dbReference>
<dbReference type="GeneTree" id="ENSGT00940000154108"/>
<dbReference type="HOGENOM" id="CLU_074593_0_0_1"/>
<dbReference type="InParanoid" id="Q91WA4"/>
<dbReference type="OMA" id="ANGHDPP"/>
<dbReference type="OrthoDB" id="8854879at2759"/>
<dbReference type="PhylomeDB" id="Q91WA4"/>
<dbReference type="TreeFam" id="TF326617"/>
<dbReference type="BioGRID-ORCS" id="67393">
    <property type="hits" value="3 hits in 76 CRISPR screens"/>
</dbReference>
<dbReference type="ChiTaRS" id="Cxxc5">
    <property type="organism name" value="mouse"/>
</dbReference>
<dbReference type="PRO" id="PR:Q91WA4"/>
<dbReference type="Proteomes" id="UP000000589">
    <property type="component" value="Chromosome 18"/>
</dbReference>
<dbReference type="RNAct" id="Q91WA4">
    <property type="molecule type" value="protein"/>
</dbReference>
<dbReference type="Bgee" id="ENSMUSG00000046668">
    <property type="expression patterns" value="Expressed in choroid plexus epithelium and 259 other cell types or tissues"/>
</dbReference>
<dbReference type="ExpressionAtlas" id="Q91WA4">
    <property type="expression patterns" value="baseline and differential"/>
</dbReference>
<dbReference type="GO" id="GO:0005829">
    <property type="term" value="C:cytosol"/>
    <property type="evidence" value="ECO:0007669"/>
    <property type="project" value="Ensembl"/>
</dbReference>
<dbReference type="GO" id="GO:0005654">
    <property type="term" value="C:nucleoplasm"/>
    <property type="evidence" value="ECO:0007669"/>
    <property type="project" value="Ensembl"/>
</dbReference>
<dbReference type="GO" id="GO:0140297">
    <property type="term" value="F:DNA-binding transcription factor binding"/>
    <property type="evidence" value="ECO:0000250"/>
    <property type="project" value="UniProtKB"/>
</dbReference>
<dbReference type="GO" id="GO:0008327">
    <property type="term" value="F:methyl-CpG binding"/>
    <property type="evidence" value="ECO:0000250"/>
    <property type="project" value="UniProtKB"/>
</dbReference>
<dbReference type="GO" id="GO:0043565">
    <property type="term" value="F:sequence-specific DNA binding"/>
    <property type="evidence" value="ECO:0000250"/>
    <property type="project" value="UniProtKB"/>
</dbReference>
<dbReference type="GO" id="GO:0008270">
    <property type="term" value="F:zinc ion binding"/>
    <property type="evidence" value="ECO:0000250"/>
    <property type="project" value="UniProtKB"/>
</dbReference>
<dbReference type="GO" id="GO:0000122">
    <property type="term" value="P:negative regulation of transcription by RNA polymerase II"/>
    <property type="evidence" value="ECO:0000250"/>
    <property type="project" value="UniProtKB"/>
</dbReference>
<dbReference type="GO" id="GO:0043467">
    <property type="term" value="P:regulation of generation of precursor metabolites and energy"/>
    <property type="evidence" value="ECO:0007669"/>
    <property type="project" value="Ensembl"/>
</dbReference>
<dbReference type="InterPro" id="IPR040388">
    <property type="entry name" value="CXXC4/CXXC5"/>
</dbReference>
<dbReference type="InterPro" id="IPR002857">
    <property type="entry name" value="Znf_CXXC"/>
</dbReference>
<dbReference type="PANTHER" id="PTHR13419:SF2">
    <property type="entry name" value="CXXC-TYPE ZINC FINGER PROTEIN 5"/>
    <property type="match status" value="1"/>
</dbReference>
<dbReference type="PANTHER" id="PTHR13419">
    <property type="entry name" value="ZINC FINGER-CONTAINING"/>
    <property type="match status" value="1"/>
</dbReference>
<dbReference type="Pfam" id="PF02008">
    <property type="entry name" value="zf-CXXC"/>
    <property type="match status" value="1"/>
</dbReference>
<dbReference type="PROSITE" id="PS51058">
    <property type="entry name" value="ZF_CXXC"/>
    <property type="match status" value="1"/>
</dbReference>
<keyword id="KW-0963">Cytoplasm</keyword>
<keyword id="KW-0238">DNA-binding</keyword>
<keyword id="KW-0479">Metal-binding</keyword>
<keyword id="KW-0539">Nucleus</keyword>
<keyword id="KW-1185">Reference proteome</keyword>
<keyword id="KW-0862">Zinc</keyword>
<keyword id="KW-0863">Zinc-finger</keyword>
<sequence length="317" mass="32812">MSSLGGGSQDAGGSSSSSNTNSSSGSGQKAGGTDKSTAVAATTAPTSVADDAPPPERRNKSGIISEPLNKSLRRSRPLSHYSSFGSSGGGGSMMGVESADKAAAAAASLLANGHDLAAAMAVDKSNPTSKHKSGAVASLLSKAERATELAAEGQLTLQQFAQSTEMLKRVVQEHLPLMSEAGAGLPDMEAVAGAEALNGQSDFPYLGAFPINPGLFIMTPAGVFLAESALHMAGLAEYPMQGELASAISSGKKKRKRCGMCAPCRRRINCEQCSSCRNRKTGHQICKFRKCEELKKKPSAALEKVMLPSGAAFRWFQ</sequence>
<protein>
    <recommendedName>
        <fullName>CXXC-type zinc finger protein 5</fullName>
    </recommendedName>
</protein>